<dbReference type="EC" id="3.1.3.-"/>
<dbReference type="EMBL" id="L43967">
    <property type="protein sequence ID" value="AAC71343.1"/>
    <property type="molecule type" value="Genomic_DNA"/>
</dbReference>
<dbReference type="PIR" id="H64213">
    <property type="entry name" value="H64213"/>
</dbReference>
<dbReference type="RefSeq" id="WP_010869344.1">
    <property type="nucleotide sequence ID" value="NC_000908.2"/>
</dbReference>
<dbReference type="SMR" id="P47371"/>
<dbReference type="FunCoup" id="P47371">
    <property type="interactions" value="46"/>
</dbReference>
<dbReference type="STRING" id="243273.MG_125"/>
<dbReference type="GeneID" id="88282249"/>
<dbReference type="KEGG" id="mge:MG_125"/>
<dbReference type="eggNOG" id="COG0561">
    <property type="taxonomic scope" value="Bacteria"/>
</dbReference>
<dbReference type="HOGENOM" id="CLU_044146_3_1_14"/>
<dbReference type="InParanoid" id="P47371"/>
<dbReference type="OrthoDB" id="9810101at2"/>
<dbReference type="BioCyc" id="MGEN243273:G1GJ2-138-MONOMER"/>
<dbReference type="Proteomes" id="UP000000807">
    <property type="component" value="Chromosome"/>
</dbReference>
<dbReference type="GO" id="GO:0005829">
    <property type="term" value="C:cytosol"/>
    <property type="evidence" value="ECO:0000318"/>
    <property type="project" value="GO_Central"/>
</dbReference>
<dbReference type="GO" id="GO:0000287">
    <property type="term" value="F:magnesium ion binding"/>
    <property type="evidence" value="ECO:0000318"/>
    <property type="project" value="GO_Central"/>
</dbReference>
<dbReference type="GO" id="GO:0016791">
    <property type="term" value="F:phosphatase activity"/>
    <property type="evidence" value="ECO:0000318"/>
    <property type="project" value="GO_Central"/>
</dbReference>
<dbReference type="Gene3D" id="3.30.1240.10">
    <property type="match status" value="1"/>
</dbReference>
<dbReference type="Gene3D" id="3.40.50.1000">
    <property type="entry name" value="HAD superfamily/HAD-like"/>
    <property type="match status" value="1"/>
</dbReference>
<dbReference type="InterPro" id="IPR000150">
    <property type="entry name" value="Cof"/>
</dbReference>
<dbReference type="InterPro" id="IPR036412">
    <property type="entry name" value="HAD-like_sf"/>
</dbReference>
<dbReference type="InterPro" id="IPR023214">
    <property type="entry name" value="HAD_sf"/>
</dbReference>
<dbReference type="NCBIfam" id="TIGR00099">
    <property type="entry name" value="Cof-subfamily"/>
    <property type="match status" value="1"/>
</dbReference>
<dbReference type="PANTHER" id="PTHR10000:SF8">
    <property type="entry name" value="HAD SUPERFAMILY HYDROLASE-LIKE, TYPE 3"/>
    <property type="match status" value="1"/>
</dbReference>
<dbReference type="PANTHER" id="PTHR10000">
    <property type="entry name" value="PHOSPHOSERINE PHOSPHATASE"/>
    <property type="match status" value="1"/>
</dbReference>
<dbReference type="Pfam" id="PF08282">
    <property type="entry name" value="Hydrolase_3"/>
    <property type="match status" value="1"/>
</dbReference>
<dbReference type="SUPFAM" id="SSF56784">
    <property type="entry name" value="HAD-like"/>
    <property type="match status" value="1"/>
</dbReference>
<dbReference type="PROSITE" id="PS01228">
    <property type="entry name" value="COF_1"/>
    <property type="match status" value="1"/>
</dbReference>
<dbReference type="PROSITE" id="PS01229">
    <property type="entry name" value="COF_2"/>
    <property type="match status" value="1"/>
</dbReference>
<protein>
    <recommendedName>
        <fullName>Putative phosphatase MG125</fullName>
        <ecNumber>3.1.3.-</ecNumber>
    </recommendedName>
</protein>
<proteinExistence type="inferred from homology"/>
<keyword id="KW-0378">Hydrolase</keyword>
<keyword id="KW-0460">Magnesium</keyword>
<keyword id="KW-0479">Metal-binding</keyword>
<keyword id="KW-1185">Reference proteome</keyword>
<name>Y125_MYCGE</name>
<comment type="cofactor">
    <cofactor evidence="1">
        <name>Mg(2+)</name>
        <dbReference type="ChEBI" id="CHEBI:18420"/>
    </cofactor>
</comment>
<comment type="similarity">
    <text evidence="2">Belongs to the HAD-like hydrolase superfamily. Cof family.</text>
</comment>
<organism>
    <name type="scientific">Mycoplasma genitalium (strain ATCC 33530 / DSM 19775 / NCTC 10195 / G37)</name>
    <name type="common">Mycoplasmoides genitalium</name>
    <dbReference type="NCBI Taxonomy" id="243273"/>
    <lineage>
        <taxon>Bacteria</taxon>
        <taxon>Bacillati</taxon>
        <taxon>Mycoplasmatota</taxon>
        <taxon>Mycoplasmoidales</taxon>
        <taxon>Mycoplasmoidaceae</taxon>
        <taxon>Mycoplasmoides</taxon>
    </lineage>
</organism>
<evidence type="ECO:0000250" key="1"/>
<evidence type="ECO:0000305" key="2"/>
<accession>P47371</accession>
<sequence>MIDLLGLDLDGTLLSKTKKINNPSKLALTNLIAKKPSLKVMILTGRSVFSTLKHVEKLNSLFKKPIVDYFCCYGGAKLYQIEANKPQERYKFCLENSVVETTFSIIKKHRGLCLAYLDSYVSPYLCLAGNKLLGWFTKYFWYRKRCVFFNQNHLKQGILKISVYFLSAKRCKKVYEILKNTFQEKVNVLSFSNNLIEITHHDANKGYAIEYMAKREQLSLNRIAVIGDSWNDYAMFKKAKYSFAMSKSPSQLKLIATNTSNKTNRYRFSTLLNLISETIINQKAD</sequence>
<feature type="chain" id="PRO_0000054435" description="Putative phosphatase MG125">
    <location>
        <begin position="1"/>
        <end position="285"/>
    </location>
</feature>
<feature type="active site" description="Nucleophile" evidence="1">
    <location>
        <position position="8"/>
    </location>
</feature>
<feature type="binding site" evidence="1">
    <location>
        <position position="8"/>
    </location>
    <ligand>
        <name>Mg(2+)</name>
        <dbReference type="ChEBI" id="CHEBI:18420"/>
    </ligand>
</feature>
<feature type="binding site" evidence="1">
    <location>
        <position position="9"/>
    </location>
    <ligand>
        <name>phosphate</name>
        <dbReference type="ChEBI" id="CHEBI:43474"/>
    </ligand>
</feature>
<feature type="binding site" evidence="1">
    <location>
        <position position="10"/>
    </location>
    <ligand>
        <name>Mg(2+)</name>
        <dbReference type="ChEBI" id="CHEBI:18420"/>
    </ligand>
</feature>
<feature type="binding site" evidence="1">
    <location>
        <begin position="44"/>
        <end position="45"/>
    </location>
    <ligand>
        <name>phosphate</name>
        <dbReference type="ChEBI" id="CHEBI:43474"/>
    </ligand>
</feature>
<feature type="binding site" evidence="1">
    <location>
        <position position="205"/>
    </location>
    <ligand>
        <name>phosphate</name>
        <dbReference type="ChEBI" id="CHEBI:43474"/>
    </ligand>
</feature>
<feature type="binding site" evidence="1">
    <location>
        <position position="228"/>
    </location>
    <ligand>
        <name>Mg(2+)</name>
        <dbReference type="ChEBI" id="CHEBI:18420"/>
    </ligand>
</feature>
<feature type="binding site" evidence="1">
    <location>
        <position position="229"/>
    </location>
    <ligand>
        <name>Mg(2+)</name>
        <dbReference type="ChEBI" id="CHEBI:18420"/>
    </ligand>
</feature>
<feature type="binding site" evidence="1">
    <location>
        <position position="231"/>
    </location>
    <ligand>
        <name>phosphate</name>
        <dbReference type="ChEBI" id="CHEBI:43474"/>
    </ligand>
</feature>
<reference key="1">
    <citation type="journal article" date="1995" name="Science">
        <title>The minimal gene complement of Mycoplasma genitalium.</title>
        <authorList>
            <person name="Fraser C.M."/>
            <person name="Gocayne J.D."/>
            <person name="White O."/>
            <person name="Adams M.D."/>
            <person name="Clayton R.A."/>
            <person name="Fleischmann R.D."/>
            <person name="Bult C.J."/>
            <person name="Kerlavage A.R."/>
            <person name="Sutton G.G."/>
            <person name="Kelley J.M."/>
            <person name="Fritchman J.L."/>
            <person name="Weidman J.F."/>
            <person name="Small K.V."/>
            <person name="Sandusky M."/>
            <person name="Fuhrmann J.L."/>
            <person name="Nguyen D.T."/>
            <person name="Utterback T.R."/>
            <person name="Saudek D.M."/>
            <person name="Phillips C.A."/>
            <person name="Merrick J.M."/>
            <person name="Tomb J.-F."/>
            <person name="Dougherty B.A."/>
            <person name="Bott K.F."/>
            <person name="Hu P.-C."/>
            <person name="Lucier T.S."/>
            <person name="Peterson S.N."/>
            <person name="Smith H.O."/>
            <person name="Hutchison C.A. III"/>
            <person name="Venter J.C."/>
        </authorList>
    </citation>
    <scope>NUCLEOTIDE SEQUENCE [LARGE SCALE GENOMIC DNA]</scope>
    <source>
        <strain>ATCC 33530 / DSM 19775 / NCTC 10195 / G37</strain>
    </source>
</reference>
<gene>
    <name type="ordered locus">MG125</name>
</gene>